<feature type="chain" id="PRO_0000276652" description="Small ribosomal subunit protein uS11c">
    <location>
        <begin position="1"/>
        <end position="129"/>
    </location>
</feature>
<sequence>MAKQVRKASKKTKLKVPSGVAHVQATFNNTIITITNPAGDVLAWCSAGASGFKGARKSTPFAAKIAAETAARKSMDYGLRQISVIIKGAGSGRESAIRGLSEAGLEIKLLRDITSIPHNGCRPPKKRRV</sequence>
<comment type="subunit">
    <text evidence="1">Part of the 30S ribosomal subunit.</text>
</comment>
<comment type="subcellular location">
    <subcellularLocation>
        <location>Plastid</location>
        <location>Chloroplast</location>
    </subcellularLocation>
</comment>
<comment type="similarity">
    <text evidence="1">Belongs to the universal ribosomal protein uS11 family.</text>
</comment>
<protein>
    <recommendedName>
        <fullName evidence="1">Small ribosomal subunit protein uS11c</fullName>
    </recommendedName>
    <alternativeName>
        <fullName evidence="2">30S ribosomal protein S11, chloroplastic</fullName>
    </alternativeName>
</protein>
<gene>
    <name evidence="1" type="primary">rps11</name>
</gene>
<proteinExistence type="inferred from homology"/>
<name>RR11_OLTVI</name>
<accession>Q20F03</accession>
<geneLocation type="chloroplast"/>
<evidence type="ECO:0000255" key="1">
    <source>
        <dbReference type="HAMAP-Rule" id="MF_01310"/>
    </source>
</evidence>
<evidence type="ECO:0000305" key="2"/>
<keyword id="KW-0150">Chloroplast</keyword>
<keyword id="KW-0934">Plastid</keyword>
<keyword id="KW-0687">Ribonucleoprotein</keyword>
<keyword id="KW-0689">Ribosomal protein</keyword>
<keyword id="KW-0694">RNA-binding</keyword>
<keyword id="KW-0699">rRNA-binding</keyword>
<reference key="1">
    <citation type="journal article" date="2006" name="BMC Biol.">
        <title>The complete chloroplast DNA sequence of the green alga Oltmannsiellopsis viridis reveals a distinctive quadripartite architecture in the chloroplast genome of early diverging ulvophytes.</title>
        <authorList>
            <person name="Pombert J.-F."/>
            <person name="Lemieux C."/>
            <person name="Turmel M."/>
        </authorList>
    </citation>
    <scope>NUCLEOTIDE SEQUENCE [LARGE SCALE GENOMIC DNA]</scope>
</reference>
<organism>
    <name type="scientific">Oltmannsiellopsis viridis</name>
    <name type="common">Marine flagellate</name>
    <name type="synonym">Oltmannsiella viridis</name>
    <dbReference type="NCBI Taxonomy" id="51324"/>
    <lineage>
        <taxon>Eukaryota</taxon>
        <taxon>Viridiplantae</taxon>
        <taxon>Chlorophyta</taxon>
        <taxon>Ulvophyceae</taxon>
        <taxon>Oltmannsiellopsidales</taxon>
        <taxon>Oltmannsiellopsidaceae</taxon>
        <taxon>Oltmannsiellopsis</taxon>
    </lineage>
</organism>
<dbReference type="EMBL" id="DQ291132">
    <property type="protein sequence ID" value="ABB82003.1"/>
    <property type="molecule type" value="Genomic_DNA"/>
</dbReference>
<dbReference type="RefSeq" id="YP_635842.1">
    <property type="nucleotide sequence ID" value="NC_008099.1"/>
</dbReference>
<dbReference type="SMR" id="Q20F03"/>
<dbReference type="GeneID" id="4100179"/>
<dbReference type="GO" id="GO:0009507">
    <property type="term" value="C:chloroplast"/>
    <property type="evidence" value="ECO:0007669"/>
    <property type="project" value="UniProtKB-SubCell"/>
</dbReference>
<dbReference type="GO" id="GO:1990904">
    <property type="term" value="C:ribonucleoprotein complex"/>
    <property type="evidence" value="ECO:0007669"/>
    <property type="project" value="UniProtKB-KW"/>
</dbReference>
<dbReference type="GO" id="GO:0005840">
    <property type="term" value="C:ribosome"/>
    <property type="evidence" value="ECO:0007669"/>
    <property type="project" value="UniProtKB-KW"/>
</dbReference>
<dbReference type="GO" id="GO:0019843">
    <property type="term" value="F:rRNA binding"/>
    <property type="evidence" value="ECO:0007669"/>
    <property type="project" value="UniProtKB-UniRule"/>
</dbReference>
<dbReference type="GO" id="GO:0003735">
    <property type="term" value="F:structural constituent of ribosome"/>
    <property type="evidence" value="ECO:0007669"/>
    <property type="project" value="InterPro"/>
</dbReference>
<dbReference type="GO" id="GO:0006412">
    <property type="term" value="P:translation"/>
    <property type="evidence" value="ECO:0007669"/>
    <property type="project" value="UniProtKB-UniRule"/>
</dbReference>
<dbReference type="FunFam" id="3.30.420.80:FF:000001">
    <property type="entry name" value="30S ribosomal protein S11"/>
    <property type="match status" value="1"/>
</dbReference>
<dbReference type="Gene3D" id="3.30.420.80">
    <property type="entry name" value="Ribosomal protein S11"/>
    <property type="match status" value="1"/>
</dbReference>
<dbReference type="HAMAP" id="MF_01310">
    <property type="entry name" value="Ribosomal_uS11"/>
    <property type="match status" value="1"/>
</dbReference>
<dbReference type="InterPro" id="IPR001971">
    <property type="entry name" value="Ribosomal_uS11"/>
</dbReference>
<dbReference type="InterPro" id="IPR019981">
    <property type="entry name" value="Ribosomal_uS11_bac-type"/>
</dbReference>
<dbReference type="InterPro" id="IPR018102">
    <property type="entry name" value="Ribosomal_uS11_CS"/>
</dbReference>
<dbReference type="InterPro" id="IPR036967">
    <property type="entry name" value="Ribosomal_uS11_sf"/>
</dbReference>
<dbReference type="NCBIfam" id="NF003698">
    <property type="entry name" value="PRK05309.1"/>
    <property type="match status" value="1"/>
</dbReference>
<dbReference type="NCBIfam" id="TIGR03632">
    <property type="entry name" value="uS11_bact"/>
    <property type="match status" value="1"/>
</dbReference>
<dbReference type="PANTHER" id="PTHR11759">
    <property type="entry name" value="40S RIBOSOMAL PROTEIN S14/30S RIBOSOMAL PROTEIN S11"/>
    <property type="match status" value="1"/>
</dbReference>
<dbReference type="Pfam" id="PF00411">
    <property type="entry name" value="Ribosomal_S11"/>
    <property type="match status" value="1"/>
</dbReference>
<dbReference type="PIRSF" id="PIRSF002131">
    <property type="entry name" value="Ribosomal_S11"/>
    <property type="match status" value="1"/>
</dbReference>
<dbReference type="SUPFAM" id="SSF53137">
    <property type="entry name" value="Translational machinery components"/>
    <property type="match status" value="1"/>
</dbReference>
<dbReference type="PROSITE" id="PS00054">
    <property type="entry name" value="RIBOSOMAL_S11"/>
    <property type="match status" value="1"/>
</dbReference>